<feature type="signal peptide" evidence="1">
    <location>
        <begin position="1"/>
        <end position="21"/>
    </location>
</feature>
<feature type="propeptide" id="PRO_0000027852" evidence="1">
    <location>
        <begin position="22"/>
        <end position="54"/>
    </location>
</feature>
<feature type="chain" id="PRO_0000027853" description="Testisin">
    <location>
        <begin position="55"/>
        <end position="298"/>
    </location>
</feature>
<feature type="propeptide" id="PRO_0000027854" description="Removed in mature form" evidence="1">
    <location>
        <begin position="299"/>
        <end position="324"/>
    </location>
</feature>
<feature type="domain" description="Peptidase S1" evidence="2">
    <location>
        <begin position="55"/>
        <end position="296"/>
    </location>
</feature>
<feature type="active site" description="Charge relay system" evidence="1">
    <location>
        <position position="95"/>
    </location>
</feature>
<feature type="active site" description="Charge relay system" evidence="1">
    <location>
        <position position="147"/>
    </location>
</feature>
<feature type="active site" description="Charge relay system" evidence="1">
    <location>
        <position position="248"/>
    </location>
</feature>
<feature type="lipid moiety-binding region" description="GPI-anchor amidated asparagine" evidence="1">
    <location>
        <position position="298"/>
    </location>
</feature>
<feature type="glycosylation site" description="N-linked (GlcNAc...) asparagine" evidence="1">
    <location>
        <position position="170"/>
    </location>
</feature>
<feature type="glycosylation site" description="N-linked (GlcNAc...) asparagine" evidence="1">
    <location>
        <position position="177"/>
    </location>
</feature>
<feature type="glycosylation site" description="N-linked (GlcNAc...) asparagine" evidence="1">
    <location>
        <position position="210"/>
    </location>
</feature>
<feature type="glycosylation site" description="N-linked (GlcNAc...) asparagine" evidence="1">
    <location>
        <position position="283"/>
    </location>
</feature>
<feature type="disulfide bond" evidence="2">
    <location>
        <begin position="46"/>
        <end position="167"/>
    </location>
</feature>
<feature type="disulfide bond" evidence="2">
    <location>
        <begin position="80"/>
        <end position="96"/>
    </location>
</feature>
<feature type="disulfide bond" evidence="2">
    <location>
        <begin position="181"/>
        <end position="254"/>
    </location>
</feature>
<feature type="disulfide bond" evidence="2">
    <location>
        <begin position="214"/>
        <end position="233"/>
    </location>
</feature>
<feature type="disulfide bond" evidence="2">
    <location>
        <begin position="244"/>
        <end position="272"/>
    </location>
</feature>
<feature type="sequence conflict" description="In Ref. 3; AK006271." evidence="3" ref="3">
    <original>P</original>
    <variation>H</variation>
    <location>
        <position position="275"/>
    </location>
</feature>
<proteinExistence type="evidence at protein level"/>
<accession>Q9JHJ7</accession>
<accession>Q9DA14</accession>
<dbReference type="EC" id="3.4.21.-"/>
<dbReference type="EMBL" id="AF304012">
    <property type="protein sequence ID" value="AAK29360.1"/>
    <property type="molecule type" value="Genomic_DNA"/>
</dbReference>
<dbReference type="EMBL" id="AY005145">
    <property type="protein sequence ID" value="AAG02255.1"/>
    <property type="molecule type" value="mRNA"/>
</dbReference>
<dbReference type="EMBL" id="AF176209">
    <property type="protein sequence ID" value="AAF64407.2"/>
    <property type="molecule type" value="mRNA"/>
</dbReference>
<dbReference type="EMBL" id="AF226710">
    <property type="protein sequence ID" value="AAF64428.2"/>
    <property type="molecule type" value="Genomic_DNA"/>
</dbReference>
<dbReference type="EMBL" id="AK006271">
    <property type="status" value="NOT_ANNOTATED_CDS"/>
    <property type="molecule type" value="mRNA"/>
</dbReference>
<dbReference type="CCDS" id="CCDS28468.1"/>
<dbReference type="RefSeq" id="NP_065233.2">
    <property type="nucleotide sequence ID" value="NM_020487.4"/>
</dbReference>
<dbReference type="SMR" id="Q9JHJ7"/>
<dbReference type="FunCoup" id="Q9JHJ7">
    <property type="interactions" value="125"/>
</dbReference>
<dbReference type="STRING" id="10090.ENSMUSP00000024928"/>
<dbReference type="MEROPS" id="S01.011"/>
<dbReference type="GlyCosmos" id="Q9JHJ7">
    <property type="glycosylation" value="4 sites, No reported glycans"/>
</dbReference>
<dbReference type="GlyGen" id="Q9JHJ7">
    <property type="glycosylation" value="4 sites"/>
</dbReference>
<dbReference type="PhosphoSitePlus" id="Q9JHJ7"/>
<dbReference type="PaxDb" id="10090-ENSMUSP00000024928"/>
<dbReference type="ProteomicsDB" id="263280"/>
<dbReference type="Antibodypedia" id="1701">
    <property type="antibodies" value="65 antibodies from 17 providers"/>
</dbReference>
<dbReference type="DNASU" id="57256"/>
<dbReference type="Ensembl" id="ENSMUST00000024928.4">
    <property type="protein sequence ID" value="ENSMUSP00000024928.4"/>
    <property type="gene ID" value="ENSMUSG00000024116.7"/>
</dbReference>
<dbReference type="GeneID" id="57256"/>
<dbReference type="KEGG" id="mmu:57256"/>
<dbReference type="UCSC" id="uc008aty.2">
    <property type="organism name" value="mouse"/>
</dbReference>
<dbReference type="AGR" id="MGI:1916698"/>
<dbReference type="CTD" id="10942"/>
<dbReference type="MGI" id="MGI:1916698">
    <property type="gene designation" value="Prss21"/>
</dbReference>
<dbReference type="VEuPathDB" id="HostDB:ENSMUSG00000024116"/>
<dbReference type="eggNOG" id="KOG3627">
    <property type="taxonomic scope" value="Eukaryota"/>
</dbReference>
<dbReference type="GeneTree" id="ENSGT00940000155138"/>
<dbReference type="HOGENOM" id="CLU_006842_0_4_1"/>
<dbReference type="InParanoid" id="Q9JHJ7"/>
<dbReference type="OMA" id="DAQGEKD"/>
<dbReference type="OrthoDB" id="10051896at2759"/>
<dbReference type="PhylomeDB" id="Q9JHJ7"/>
<dbReference type="TreeFam" id="TF351676"/>
<dbReference type="Reactome" id="R-MMU-163125">
    <property type="pathway name" value="Post-translational modification: synthesis of GPI-anchored proteins"/>
</dbReference>
<dbReference type="BioGRID-ORCS" id="57256">
    <property type="hits" value="3 hits in 78 CRISPR screens"/>
</dbReference>
<dbReference type="PRO" id="PR:Q9JHJ7"/>
<dbReference type="Proteomes" id="UP000000589">
    <property type="component" value="Chromosome 17"/>
</dbReference>
<dbReference type="RNAct" id="Q9JHJ7">
    <property type="molecule type" value="protein"/>
</dbReference>
<dbReference type="Bgee" id="ENSMUSG00000024116">
    <property type="expression patterns" value="Expressed in spermatid and 8 other cell types or tissues"/>
</dbReference>
<dbReference type="ExpressionAtlas" id="Q9JHJ7">
    <property type="expression patterns" value="differential"/>
</dbReference>
<dbReference type="GO" id="GO:0016020">
    <property type="term" value="C:membrane"/>
    <property type="evidence" value="ECO:0000314"/>
    <property type="project" value="MGI"/>
</dbReference>
<dbReference type="GO" id="GO:0005886">
    <property type="term" value="C:plasma membrane"/>
    <property type="evidence" value="ECO:0007669"/>
    <property type="project" value="UniProtKB-SubCell"/>
</dbReference>
<dbReference type="GO" id="GO:0098552">
    <property type="term" value="C:side of membrane"/>
    <property type="evidence" value="ECO:0007669"/>
    <property type="project" value="UniProtKB-KW"/>
</dbReference>
<dbReference type="GO" id="GO:0004252">
    <property type="term" value="F:serine-type endopeptidase activity"/>
    <property type="evidence" value="ECO:0000314"/>
    <property type="project" value="MGI"/>
</dbReference>
<dbReference type="GO" id="GO:0008236">
    <property type="term" value="F:serine-type peptidase activity"/>
    <property type="evidence" value="ECO:0000266"/>
    <property type="project" value="MGI"/>
</dbReference>
<dbReference type="GO" id="GO:0006508">
    <property type="term" value="P:proteolysis"/>
    <property type="evidence" value="ECO:0007669"/>
    <property type="project" value="UniProtKB-KW"/>
</dbReference>
<dbReference type="GO" id="GO:0007283">
    <property type="term" value="P:spermatogenesis"/>
    <property type="evidence" value="ECO:0000304"/>
    <property type="project" value="MGI"/>
</dbReference>
<dbReference type="CDD" id="cd00190">
    <property type="entry name" value="Tryp_SPc"/>
    <property type="match status" value="1"/>
</dbReference>
<dbReference type="FunFam" id="2.40.10.10:FF:000024">
    <property type="entry name" value="Serine protease 53"/>
    <property type="match status" value="1"/>
</dbReference>
<dbReference type="Gene3D" id="2.40.10.10">
    <property type="entry name" value="Trypsin-like serine proteases"/>
    <property type="match status" value="1"/>
</dbReference>
<dbReference type="InterPro" id="IPR009003">
    <property type="entry name" value="Peptidase_S1_PA"/>
</dbReference>
<dbReference type="InterPro" id="IPR043504">
    <property type="entry name" value="Peptidase_S1_PA_chymotrypsin"/>
</dbReference>
<dbReference type="InterPro" id="IPR001314">
    <property type="entry name" value="Peptidase_S1A"/>
</dbReference>
<dbReference type="InterPro" id="IPR001254">
    <property type="entry name" value="Trypsin_dom"/>
</dbReference>
<dbReference type="InterPro" id="IPR018114">
    <property type="entry name" value="TRYPSIN_HIS"/>
</dbReference>
<dbReference type="InterPro" id="IPR033116">
    <property type="entry name" value="TRYPSIN_SER"/>
</dbReference>
<dbReference type="PANTHER" id="PTHR24252">
    <property type="entry name" value="ACROSIN-RELATED"/>
    <property type="match status" value="1"/>
</dbReference>
<dbReference type="PANTHER" id="PTHR24252:SF17">
    <property type="entry name" value="SUPPRESSOR OF TUMORIGENICITY 14 PROTEIN HOMOLOG-RELATED"/>
    <property type="match status" value="1"/>
</dbReference>
<dbReference type="Pfam" id="PF00089">
    <property type="entry name" value="Trypsin"/>
    <property type="match status" value="1"/>
</dbReference>
<dbReference type="PRINTS" id="PR00722">
    <property type="entry name" value="CHYMOTRYPSIN"/>
</dbReference>
<dbReference type="SMART" id="SM00020">
    <property type="entry name" value="Tryp_SPc"/>
    <property type="match status" value="1"/>
</dbReference>
<dbReference type="SUPFAM" id="SSF50494">
    <property type="entry name" value="Trypsin-like serine proteases"/>
    <property type="match status" value="1"/>
</dbReference>
<dbReference type="PROSITE" id="PS50240">
    <property type="entry name" value="TRYPSIN_DOM"/>
    <property type="match status" value="1"/>
</dbReference>
<dbReference type="PROSITE" id="PS00134">
    <property type="entry name" value="TRYPSIN_HIS"/>
    <property type="match status" value="1"/>
</dbReference>
<dbReference type="PROSITE" id="PS00135">
    <property type="entry name" value="TRYPSIN_SER"/>
    <property type="match status" value="1"/>
</dbReference>
<protein>
    <recommendedName>
        <fullName>Testisin</fullName>
        <ecNumber>3.4.21.-</ecNumber>
    </recommendedName>
    <alternativeName>
        <fullName>Serine protease 21</fullName>
    </alternativeName>
    <alternativeName>
        <fullName>Tryptase 4</fullName>
    </alternativeName>
</protein>
<name>TEST_MOUSE</name>
<sequence>MGARGKTLVPLLVVVATAAMALQSTYLQVDPEKPELQEPDLLSGPCGHRTIPSRIVGGDDAELGRWPWQGSLRVWGNHLCGATLLNRRWVLTAAHCFQKDNDPFDWTVQFGELTSRPSLWNLQAYSNRYQIEDIFLSPKYSEQYPNDIALLKLSSPVTYNNFIQPICLLNSTYKFENRTDCWVTGWGAIGEDESLPSPNTLQEVQVAIINNSMCNHMYKKPDFRTNIWGDMVCAGTPEGGKDACFGDSGGPLACDQDTVWYQVGVVSWGIGCGRPNRPGVYTNISHHYNWIQSTMIRNGLLRPDPVPLLLFLTLAWASSLLRPA</sequence>
<organism>
    <name type="scientific">Mus musculus</name>
    <name type="common">Mouse</name>
    <dbReference type="NCBI Taxonomy" id="10090"/>
    <lineage>
        <taxon>Eukaryota</taxon>
        <taxon>Metazoa</taxon>
        <taxon>Chordata</taxon>
        <taxon>Craniata</taxon>
        <taxon>Vertebrata</taxon>
        <taxon>Euteleostomi</taxon>
        <taxon>Mammalia</taxon>
        <taxon>Eutheria</taxon>
        <taxon>Euarchontoglires</taxon>
        <taxon>Glires</taxon>
        <taxon>Rodentia</taxon>
        <taxon>Myomorpha</taxon>
        <taxon>Muroidea</taxon>
        <taxon>Muridae</taxon>
        <taxon>Murinae</taxon>
        <taxon>Mus</taxon>
        <taxon>Mus</taxon>
    </lineage>
</organism>
<reference key="1">
    <citation type="journal article" date="2001" name="Eur. J. Biochem.">
        <title>Organization and chromosomal localization of the murine Testisin gene encoding a serine protease temporally expressed during spermatogenesis.</title>
        <authorList>
            <person name="Scarman A.L."/>
            <person name="Hooper J.D."/>
            <person name="Boucaut K.J."/>
            <person name="Sit M.-L."/>
            <person name="Webb G.C."/>
            <person name="Normyle J.F."/>
            <person name="Antalis T.M."/>
        </authorList>
    </citation>
    <scope>NUCLEOTIDE SEQUENCE [GENOMIC DNA / MRNA]</scope>
    <source>
        <strain>129/Sv</strain>
    </source>
</reference>
<reference key="2">
    <citation type="journal article" date="2001" name="J. Biol. Chem.">
        <title>Tryptase 4, a new member of the chromosome 17 family of mouse serine proteases.</title>
        <authorList>
            <person name="Wong G.W."/>
            <person name="Li L."/>
            <person name="Madhusudhan M.S."/>
            <person name="Krilis S.A."/>
            <person name="Gurish M.F."/>
            <person name="Rothenberg M.E."/>
            <person name="Sali A."/>
            <person name="Stevens R.L."/>
        </authorList>
    </citation>
    <scope>NUCLEOTIDE SEQUENCE [GENOMIC DNA / MRNA]</scope>
    <source>
        <strain>BALB/cJ</strain>
        <tissue>Testis</tissue>
    </source>
</reference>
<reference key="3">
    <citation type="journal article" date="2005" name="Science">
        <title>The transcriptional landscape of the mammalian genome.</title>
        <authorList>
            <person name="Carninci P."/>
            <person name="Kasukawa T."/>
            <person name="Katayama S."/>
            <person name="Gough J."/>
            <person name="Frith M.C."/>
            <person name="Maeda N."/>
            <person name="Oyama R."/>
            <person name="Ravasi T."/>
            <person name="Lenhard B."/>
            <person name="Wells C."/>
            <person name="Kodzius R."/>
            <person name="Shimokawa K."/>
            <person name="Bajic V.B."/>
            <person name="Brenner S.E."/>
            <person name="Batalov S."/>
            <person name="Forrest A.R."/>
            <person name="Zavolan M."/>
            <person name="Davis M.J."/>
            <person name="Wilming L.G."/>
            <person name="Aidinis V."/>
            <person name="Allen J.E."/>
            <person name="Ambesi-Impiombato A."/>
            <person name="Apweiler R."/>
            <person name="Aturaliya R.N."/>
            <person name="Bailey T.L."/>
            <person name="Bansal M."/>
            <person name="Baxter L."/>
            <person name="Beisel K.W."/>
            <person name="Bersano T."/>
            <person name="Bono H."/>
            <person name="Chalk A.M."/>
            <person name="Chiu K.P."/>
            <person name="Choudhary V."/>
            <person name="Christoffels A."/>
            <person name="Clutterbuck D.R."/>
            <person name="Crowe M.L."/>
            <person name="Dalla E."/>
            <person name="Dalrymple B.P."/>
            <person name="de Bono B."/>
            <person name="Della Gatta G."/>
            <person name="di Bernardo D."/>
            <person name="Down T."/>
            <person name="Engstrom P."/>
            <person name="Fagiolini M."/>
            <person name="Faulkner G."/>
            <person name="Fletcher C.F."/>
            <person name="Fukushima T."/>
            <person name="Furuno M."/>
            <person name="Futaki S."/>
            <person name="Gariboldi M."/>
            <person name="Georgii-Hemming P."/>
            <person name="Gingeras T.R."/>
            <person name="Gojobori T."/>
            <person name="Green R.E."/>
            <person name="Gustincich S."/>
            <person name="Harbers M."/>
            <person name="Hayashi Y."/>
            <person name="Hensch T.K."/>
            <person name="Hirokawa N."/>
            <person name="Hill D."/>
            <person name="Huminiecki L."/>
            <person name="Iacono M."/>
            <person name="Ikeo K."/>
            <person name="Iwama A."/>
            <person name="Ishikawa T."/>
            <person name="Jakt M."/>
            <person name="Kanapin A."/>
            <person name="Katoh M."/>
            <person name="Kawasawa Y."/>
            <person name="Kelso J."/>
            <person name="Kitamura H."/>
            <person name="Kitano H."/>
            <person name="Kollias G."/>
            <person name="Krishnan S.P."/>
            <person name="Kruger A."/>
            <person name="Kummerfeld S.K."/>
            <person name="Kurochkin I.V."/>
            <person name="Lareau L.F."/>
            <person name="Lazarevic D."/>
            <person name="Lipovich L."/>
            <person name="Liu J."/>
            <person name="Liuni S."/>
            <person name="McWilliam S."/>
            <person name="Madan Babu M."/>
            <person name="Madera M."/>
            <person name="Marchionni L."/>
            <person name="Matsuda H."/>
            <person name="Matsuzawa S."/>
            <person name="Miki H."/>
            <person name="Mignone F."/>
            <person name="Miyake S."/>
            <person name="Morris K."/>
            <person name="Mottagui-Tabar S."/>
            <person name="Mulder N."/>
            <person name="Nakano N."/>
            <person name="Nakauchi H."/>
            <person name="Ng P."/>
            <person name="Nilsson R."/>
            <person name="Nishiguchi S."/>
            <person name="Nishikawa S."/>
            <person name="Nori F."/>
            <person name="Ohara O."/>
            <person name="Okazaki Y."/>
            <person name="Orlando V."/>
            <person name="Pang K.C."/>
            <person name="Pavan W.J."/>
            <person name="Pavesi G."/>
            <person name="Pesole G."/>
            <person name="Petrovsky N."/>
            <person name="Piazza S."/>
            <person name="Reed J."/>
            <person name="Reid J.F."/>
            <person name="Ring B.Z."/>
            <person name="Ringwald M."/>
            <person name="Rost B."/>
            <person name="Ruan Y."/>
            <person name="Salzberg S.L."/>
            <person name="Sandelin A."/>
            <person name="Schneider C."/>
            <person name="Schoenbach C."/>
            <person name="Sekiguchi K."/>
            <person name="Semple C.A."/>
            <person name="Seno S."/>
            <person name="Sessa L."/>
            <person name="Sheng Y."/>
            <person name="Shibata Y."/>
            <person name="Shimada H."/>
            <person name="Shimada K."/>
            <person name="Silva D."/>
            <person name="Sinclair B."/>
            <person name="Sperling S."/>
            <person name="Stupka E."/>
            <person name="Sugiura K."/>
            <person name="Sultana R."/>
            <person name="Takenaka Y."/>
            <person name="Taki K."/>
            <person name="Tammoja K."/>
            <person name="Tan S.L."/>
            <person name="Tang S."/>
            <person name="Taylor M.S."/>
            <person name="Tegner J."/>
            <person name="Teichmann S.A."/>
            <person name="Ueda H.R."/>
            <person name="van Nimwegen E."/>
            <person name="Verardo R."/>
            <person name="Wei C.L."/>
            <person name="Yagi K."/>
            <person name="Yamanishi H."/>
            <person name="Zabarovsky E."/>
            <person name="Zhu S."/>
            <person name="Zimmer A."/>
            <person name="Hide W."/>
            <person name="Bult C."/>
            <person name="Grimmond S.M."/>
            <person name="Teasdale R.D."/>
            <person name="Liu E.T."/>
            <person name="Brusic V."/>
            <person name="Quackenbush J."/>
            <person name="Wahlestedt C."/>
            <person name="Mattick J.S."/>
            <person name="Hume D.A."/>
            <person name="Kai C."/>
            <person name="Sasaki D."/>
            <person name="Tomaru Y."/>
            <person name="Fukuda S."/>
            <person name="Kanamori-Katayama M."/>
            <person name="Suzuki M."/>
            <person name="Aoki J."/>
            <person name="Arakawa T."/>
            <person name="Iida J."/>
            <person name="Imamura K."/>
            <person name="Itoh M."/>
            <person name="Kato T."/>
            <person name="Kawaji H."/>
            <person name="Kawagashira N."/>
            <person name="Kawashima T."/>
            <person name="Kojima M."/>
            <person name="Kondo S."/>
            <person name="Konno H."/>
            <person name="Nakano K."/>
            <person name="Ninomiya N."/>
            <person name="Nishio T."/>
            <person name="Okada M."/>
            <person name="Plessy C."/>
            <person name="Shibata K."/>
            <person name="Shiraki T."/>
            <person name="Suzuki S."/>
            <person name="Tagami M."/>
            <person name="Waki K."/>
            <person name="Watahiki A."/>
            <person name="Okamura-Oho Y."/>
            <person name="Suzuki H."/>
            <person name="Kawai J."/>
            <person name="Hayashizaki Y."/>
        </authorList>
    </citation>
    <scope>NUCLEOTIDE SEQUENCE [LARGE SCALE MRNA] OF 3-324</scope>
    <source>
        <strain>C57BL/6J</strain>
        <tissue>Testis</tissue>
    </source>
</reference>
<reference key="4">
    <citation type="journal article" date="2010" name="Cell">
        <title>A tissue-specific atlas of mouse protein phosphorylation and expression.</title>
        <authorList>
            <person name="Huttlin E.L."/>
            <person name="Jedrychowski M.P."/>
            <person name="Elias J.E."/>
            <person name="Goswami T."/>
            <person name="Rad R."/>
            <person name="Beausoleil S.A."/>
            <person name="Villen J."/>
            <person name="Haas W."/>
            <person name="Sowa M.E."/>
            <person name="Gygi S.P."/>
        </authorList>
    </citation>
    <scope>IDENTIFICATION BY MASS SPECTROMETRY [LARGE SCALE ANALYSIS]</scope>
    <source>
        <tissue>Testis</tissue>
    </source>
</reference>
<keyword id="KW-1003">Cell membrane</keyword>
<keyword id="KW-1015">Disulfide bond</keyword>
<keyword id="KW-0325">Glycoprotein</keyword>
<keyword id="KW-0336">GPI-anchor</keyword>
<keyword id="KW-0378">Hydrolase</keyword>
<keyword id="KW-0449">Lipoprotein</keyword>
<keyword id="KW-0472">Membrane</keyword>
<keyword id="KW-0645">Protease</keyword>
<keyword id="KW-1185">Reference proteome</keyword>
<keyword id="KW-0720">Serine protease</keyword>
<keyword id="KW-0732">Signal</keyword>
<keyword id="KW-0865">Zymogen</keyword>
<gene>
    <name type="primary">Prss21</name>
</gene>
<evidence type="ECO:0000255" key="1"/>
<evidence type="ECO:0000255" key="2">
    <source>
        <dbReference type="PROSITE-ProRule" id="PRU00274"/>
    </source>
</evidence>
<evidence type="ECO:0000305" key="3"/>
<comment type="function">
    <text>Could regulate proteolytic events associated with testicular germ cell maturation.</text>
</comment>
<comment type="subcellular location">
    <subcellularLocation>
        <location evidence="3">Cell membrane</location>
        <topology evidence="3">Lipid-anchor</topology>
        <topology evidence="3">GPI-anchor</topology>
    </subcellularLocation>
</comment>
<comment type="tissue specificity">
    <text>Testis.</text>
</comment>
<comment type="developmental stage">
    <text>Expressed in post-meiotic testicular germ cells.</text>
</comment>
<comment type="similarity">
    <text evidence="2">Belongs to the peptidase S1 family.</text>
</comment>
<comment type="sequence caution" evidence="3">
    <conflict type="erroneous termination">
        <sequence resource="EMBL" id="AK006271"/>
    </conflict>
    <text>Truncated C-terminus.</text>
</comment>